<dbReference type="EC" id="5.6.2.1" evidence="1"/>
<dbReference type="EMBL" id="AE017194">
    <property type="protein sequence ID" value="AAS39420.1"/>
    <property type="molecule type" value="Genomic_DNA"/>
</dbReference>
<dbReference type="SMR" id="Q73E74"/>
<dbReference type="KEGG" id="bca:BCE_0485"/>
<dbReference type="HOGENOM" id="CLU_002929_5_2_9"/>
<dbReference type="Proteomes" id="UP000002527">
    <property type="component" value="Chromosome"/>
</dbReference>
<dbReference type="GO" id="GO:0043597">
    <property type="term" value="C:cytoplasmic replication fork"/>
    <property type="evidence" value="ECO:0007669"/>
    <property type="project" value="TreeGrafter"/>
</dbReference>
<dbReference type="GO" id="GO:0003677">
    <property type="term" value="F:DNA binding"/>
    <property type="evidence" value="ECO:0007669"/>
    <property type="project" value="UniProtKB-KW"/>
</dbReference>
<dbReference type="GO" id="GO:0003917">
    <property type="term" value="F:DNA topoisomerase type I (single strand cut, ATP-independent) activity"/>
    <property type="evidence" value="ECO:0007669"/>
    <property type="project" value="UniProtKB-UniRule"/>
</dbReference>
<dbReference type="GO" id="GO:0000287">
    <property type="term" value="F:magnesium ion binding"/>
    <property type="evidence" value="ECO:0007669"/>
    <property type="project" value="UniProtKB-UniRule"/>
</dbReference>
<dbReference type="GO" id="GO:0006310">
    <property type="term" value="P:DNA recombination"/>
    <property type="evidence" value="ECO:0007669"/>
    <property type="project" value="TreeGrafter"/>
</dbReference>
<dbReference type="GO" id="GO:0006281">
    <property type="term" value="P:DNA repair"/>
    <property type="evidence" value="ECO:0007669"/>
    <property type="project" value="TreeGrafter"/>
</dbReference>
<dbReference type="GO" id="GO:0006265">
    <property type="term" value="P:DNA topological change"/>
    <property type="evidence" value="ECO:0007669"/>
    <property type="project" value="UniProtKB-UniRule"/>
</dbReference>
<dbReference type="CDD" id="cd00186">
    <property type="entry name" value="TOP1Ac"/>
    <property type="match status" value="1"/>
</dbReference>
<dbReference type="CDD" id="cd03362">
    <property type="entry name" value="TOPRIM_TopoIA_TopoIII"/>
    <property type="match status" value="1"/>
</dbReference>
<dbReference type="Gene3D" id="3.40.50.140">
    <property type="match status" value="1"/>
</dbReference>
<dbReference type="Gene3D" id="1.10.460.10">
    <property type="entry name" value="Topoisomerase I, domain 2"/>
    <property type="match status" value="1"/>
</dbReference>
<dbReference type="Gene3D" id="2.70.20.10">
    <property type="entry name" value="Topoisomerase I, domain 3"/>
    <property type="match status" value="1"/>
</dbReference>
<dbReference type="Gene3D" id="1.10.290.10">
    <property type="entry name" value="Topoisomerase I, domain 4"/>
    <property type="match status" value="1"/>
</dbReference>
<dbReference type="HAMAP" id="MF_00953">
    <property type="entry name" value="Topoisom_3_prok"/>
    <property type="match status" value="1"/>
</dbReference>
<dbReference type="InterPro" id="IPR000380">
    <property type="entry name" value="Topo_IA"/>
</dbReference>
<dbReference type="InterPro" id="IPR003601">
    <property type="entry name" value="Topo_IA_2"/>
</dbReference>
<dbReference type="InterPro" id="IPR023406">
    <property type="entry name" value="Topo_IA_AS"/>
</dbReference>
<dbReference type="InterPro" id="IPR013497">
    <property type="entry name" value="Topo_IA_cen"/>
</dbReference>
<dbReference type="InterPro" id="IPR013824">
    <property type="entry name" value="Topo_IA_cen_sub1"/>
</dbReference>
<dbReference type="InterPro" id="IPR013825">
    <property type="entry name" value="Topo_IA_cen_sub2"/>
</dbReference>
<dbReference type="InterPro" id="IPR013826">
    <property type="entry name" value="Topo_IA_cen_sub3"/>
</dbReference>
<dbReference type="InterPro" id="IPR023405">
    <property type="entry name" value="Topo_IA_core_domain"/>
</dbReference>
<dbReference type="InterPro" id="IPR003602">
    <property type="entry name" value="Topo_IA_DNA-bd_dom"/>
</dbReference>
<dbReference type="InterPro" id="IPR005738">
    <property type="entry name" value="TopoIII"/>
</dbReference>
<dbReference type="InterPro" id="IPR006171">
    <property type="entry name" value="TOPRIM_dom"/>
</dbReference>
<dbReference type="InterPro" id="IPR034144">
    <property type="entry name" value="TOPRIM_TopoIII"/>
</dbReference>
<dbReference type="NCBIfam" id="NF005829">
    <property type="entry name" value="PRK07726.1"/>
    <property type="match status" value="1"/>
</dbReference>
<dbReference type="NCBIfam" id="TIGR01056">
    <property type="entry name" value="topB"/>
    <property type="match status" value="1"/>
</dbReference>
<dbReference type="PANTHER" id="PTHR11390:SF21">
    <property type="entry name" value="DNA TOPOISOMERASE 3-ALPHA"/>
    <property type="match status" value="1"/>
</dbReference>
<dbReference type="PANTHER" id="PTHR11390">
    <property type="entry name" value="PROKARYOTIC DNA TOPOISOMERASE"/>
    <property type="match status" value="1"/>
</dbReference>
<dbReference type="Pfam" id="PF01131">
    <property type="entry name" value="Topoisom_bac"/>
    <property type="match status" value="1"/>
</dbReference>
<dbReference type="Pfam" id="PF01751">
    <property type="entry name" value="Toprim"/>
    <property type="match status" value="1"/>
</dbReference>
<dbReference type="PRINTS" id="PR00417">
    <property type="entry name" value="PRTPISMRASEI"/>
</dbReference>
<dbReference type="SMART" id="SM00437">
    <property type="entry name" value="TOP1Ac"/>
    <property type="match status" value="1"/>
</dbReference>
<dbReference type="SMART" id="SM00436">
    <property type="entry name" value="TOP1Bc"/>
    <property type="match status" value="1"/>
</dbReference>
<dbReference type="SMART" id="SM00493">
    <property type="entry name" value="TOPRIM"/>
    <property type="match status" value="1"/>
</dbReference>
<dbReference type="SUPFAM" id="SSF56712">
    <property type="entry name" value="Prokaryotic type I DNA topoisomerase"/>
    <property type="match status" value="1"/>
</dbReference>
<dbReference type="PROSITE" id="PS00396">
    <property type="entry name" value="TOPO_IA_1"/>
    <property type="match status" value="1"/>
</dbReference>
<dbReference type="PROSITE" id="PS52039">
    <property type="entry name" value="TOPO_IA_2"/>
    <property type="match status" value="1"/>
</dbReference>
<dbReference type="PROSITE" id="PS50880">
    <property type="entry name" value="TOPRIM"/>
    <property type="match status" value="1"/>
</dbReference>
<feature type="chain" id="PRO_0000286360" description="DNA topoisomerase 3">
    <location>
        <begin position="1"/>
        <end position="729"/>
    </location>
</feature>
<feature type="domain" description="Toprim" evidence="1">
    <location>
        <begin position="3"/>
        <end position="136"/>
    </location>
</feature>
<feature type="domain" description="Topo IA-type catalytic" evidence="2">
    <location>
        <begin position="153"/>
        <end position="594"/>
    </location>
</feature>
<feature type="region of interest" description="Interaction with DNA" evidence="1">
    <location>
        <begin position="187"/>
        <end position="192"/>
    </location>
</feature>
<feature type="region of interest" description="Disordered" evidence="3">
    <location>
        <begin position="686"/>
        <end position="718"/>
    </location>
</feature>
<feature type="compositionally biased region" description="Basic and acidic residues" evidence="3">
    <location>
        <begin position="686"/>
        <end position="713"/>
    </location>
</feature>
<feature type="active site" description="O-(5'-phospho-DNA)-tyrosine intermediate" evidence="2">
    <location>
        <position position="310"/>
    </location>
</feature>
<feature type="binding site" evidence="1">
    <location>
        <position position="9"/>
    </location>
    <ligand>
        <name>Mg(2+)</name>
        <dbReference type="ChEBI" id="CHEBI:18420"/>
        <note>catalytic</note>
    </ligand>
</feature>
<feature type="binding site" evidence="1">
    <location>
        <position position="105"/>
    </location>
    <ligand>
        <name>Mg(2+)</name>
        <dbReference type="ChEBI" id="CHEBI:18420"/>
        <note>catalytic</note>
    </ligand>
</feature>
<feature type="site" description="Interaction with DNA" evidence="1">
    <location>
        <position position="61"/>
    </location>
</feature>
<feature type="site" description="Interaction with DNA" evidence="1">
    <location>
        <position position="168"/>
    </location>
</feature>
<feature type="site" description="Interaction with DNA" evidence="1">
    <location>
        <position position="176"/>
    </location>
</feature>
<feature type="site" description="Interaction with DNA" evidence="1">
    <location>
        <position position="312"/>
    </location>
</feature>
<evidence type="ECO:0000255" key="1">
    <source>
        <dbReference type="HAMAP-Rule" id="MF_00953"/>
    </source>
</evidence>
<evidence type="ECO:0000255" key="2">
    <source>
        <dbReference type="PROSITE-ProRule" id="PRU01383"/>
    </source>
</evidence>
<evidence type="ECO:0000256" key="3">
    <source>
        <dbReference type="SAM" id="MobiDB-lite"/>
    </source>
</evidence>
<name>TOP3_BACC1</name>
<protein>
    <recommendedName>
        <fullName evidence="1">DNA topoisomerase 3</fullName>
        <ecNumber evidence="1">5.6.2.1</ecNumber>
    </recommendedName>
    <alternativeName>
        <fullName evidence="1">DNA topoisomerase III</fullName>
    </alternativeName>
</protein>
<sequence>MSKSVVIAEKPSVARDIARVLKCDKKGNGYLEGSKYIVTWALGHLVTLADPESYDVKYKKWNLEDLPMLPERLKLTVIKQTGKQFNAVKSQLLRKDVNEIIVATDAGREGELVARWIIDKVRINKPIKRLWISSVTDKAIKDGFANLKPGRAYDNLYASAVARSEADWYIGLNATRALTTRFNAQLNCGRVQTPTVAMIANREDEIKNFKAQTYYGIEAQTTNQLKLTWQDANGNSRSFNKEKIDGIVKGLDKHNATVMEIDKKQKKSFSPGLYDLTELQRDANKKFGYSAKETLNIMQKLYEQHKVLTYPRTDSRYISSDIVGTLPERLKACGVGEYRPLAHKVLQKPIKANKSFVDDSKVSDHHAIIPTEGYVNFSAFTDKERKIYDLVVKRFLAVLFPAFEYEQLTLRTKVGNETFIARGKTILHAGWKEVYENRFEDDDVTDDVKEQLLPRIEKGDTLTVKLIMQTSGQTKAPARFNEATLLSAMENPTKYMDTQNKQLADTLKSTGGLGTVATRADIIDKLFNSFLIEKRGKDIHITSKGRQLLDLVPEELKSPTLTGEWEQKLEAIAKGKLKKEVFISEMKNYTKEIVSEIKSSDKKYKHDNISTKSCPDCGKPMLEVNGKKGKMLVCQDRECGHRKNVSRTTNARCPQCKKKLELRGEGAGQIFACKCGYREKLSKFQERRKKESGNKADKRDVQKYMKQQKKEEEPLNNPFAEALKKLKFD</sequence>
<comment type="function">
    <text evidence="1">Releases the supercoiling and torsional tension of DNA, which is introduced during the DNA replication and transcription, by transiently cleaving and rejoining one strand of the DNA duplex. Introduces a single-strand break via transesterification at a target site in duplex DNA. The scissile phosphodiester is attacked by the catalytic tyrosine of the enzyme, resulting in the formation of a DNA-(5'-phosphotyrosyl)-enzyme intermediate and the expulsion of a 3'-OH DNA strand. The free DNA strand then undergoes passage around the unbroken strand, thus removing DNA supercoils. Finally, in the religation step, the DNA 3'-OH attacks the covalent intermediate to expel the active-site tyrosine and restore the DNA phosphodiester backbone.</text>
</comment>
<comment type="catalytic activity">
    <reaction evidence="1">
        <text>ATP-independent breakage of single-stranded DNA, followed by passage and rejoining.</text>
        <dbReference type="EC" id="5.6.2.1"/>
    </reaction>
</comment>
<comment type="cofactor">
    <cofactor evidence="1">
        <name>Mg(2+)</name>
        <dbReference type="ChEBI" id="CHEBI:18420"/>
    </cofactor>
</comment>
<comment type="similarity">
    <text evidence="1 2">Belongs to the type IA topoisomerase family.</text>
</comment>
<organism>
    <name type="scientific">Bacillus cereus (strain ATCC 10987 / NRS 248)</name>
    <dbReference type="NCBI Taxonomy" id="222523"/>
    <lineage>
        <taxon>Bacteria</taxon>
        <taxon>Bacillati</taxon>
        <taxon>Bacillota</taxon>
        <taxon>Bacilli</taxon>
        <taxon>Bacillales</taxon>
        <taxon>Bacillaceae</taxon>
        <taxon>Bacillus</taxon>
        <taxon>Bacillus cereus group</taxon>
    </lineage>
</organism>
<gene>
    <name evidence="1" type="primary">topB</name>
    <name type="ordered locus">BCE_0485</name>
</gene>
<proteinExistence type="inferred from homology"/>
<reference key="1">
    <citation type="journal article" date="2004" name="Nucleic Acids Res.">
        <title>The genome sequence of Bacillus cereus ATCC 10987 reveals metabolic adaptations and a large plasmid related to Bacillus anthracis pXO1.</title>
        <authorList>
            <person name="Rasko D.A."/>
            <person name="Ravel J."/>
            <person name="Oekstad O.A."/>
            <person name="Helgason E."/>
            <person name="Cer R.Z."/>
            <person name="Jiang L."/>
            <person name="Shores K.A."/>
            <person name="Fouts D.E."/>
            <person name="Tourasse N.J."/>
            <person name="Angiuoli S.V."/>
            <person name="Kolonay J.F."/>
            <person name="Nelson W.C."/>
            <person name="Kolstoe A.-B."/>
            <person name="Fraser C.M."/>
            <person name="Read T.D."/>
        </authorList>
    </citation>
    <scope>NUCLEOTIDE SEQUENCE [LARGE SCALE GENOMIC DNA]</scope>
    <source>
        <strain>ATCC 10987 / NRS 248</strain>
    </source>
</reference>
<accession>Q73E74</accession>
<keyword id="KW-0238">DNA-binding</keyword>
<keyword id="KW-0413">Isomerase</keyword>
<keyword id="KW-0460">Magnesium</keyword>
<keyword id="KW-0479">Metal-binding</keyword>
<keyword id="KW-0799">Topoisomerase</keyword>